<sequence>MNVDTTSPQAPLAGVESKQDGASNEATAKAESTTHDQNESSSFDERPVHSALSERQRSALLAVASFAAAISPASTTTYYPAITTLANDLDVSITQINLSLPAYQIFQGLAPTVAAAFSDRFGRRPVYLVSLSINMAANLGLALQKNYASLMVLRCLQSSSSGGTVALGQAVMDDLITSEERGRYMAYLTLGLVMGPALGPLIGGLLSQYLGWRAIFWFLMILGGFFFLMVLTFFRETNRSIVGDGSVPPQKWNRSLVQIFRKDKLIANPESLAKKRISVNPLASIQILRNKENFIVCMYGALLFGGYASVISIFATQLEERYGYSQVQVGLCYLPFGVGSILSRWTAGKMIDWNFKREADKQGFKIVKNRQQDLSRYDIEKARLTVSFPMIFATCGFVVAYGWLMQYDTHVASVLVVVFLIANVFTGVLIANSALLNDLNPGNGAALGAAMNLTRCLMGAGGVAAVTPLINKIGIGYTATATAGVWVVTLPALYLVYSKGYTWRKAALEASSQDRRENPDVASGSP</sequence>
<feature type="chain" id="PRO_0000452629" description="MFS-type transporter clz19">
    <location>
        <begin position="1"/>
        <end position="526"/>
    </location>
</feature>
<feature type="transmembrane region" description="Helical" evidence="1">
    <location>
        <begin position="59"/>
        <end position="79"/>
    </location>
</feature>
<feature type="transmembrane region" description="Helical" evidence="1">
    <location>
        <begin position="126"/>
        <end position="143"/>
    </location>
</feature>
<feature type="transmembrane region" description="Helical" evidence="1">
    <location>
        <begin position="186"/>
        <end position="206"/>
    </location>
</feature>
<feature type="transmembrane region" description="Helical" evidence="1">
    <location>
        <begin position="214"/>
        <end position="234"/>
    </location>
</feature>
<feature type="transmembrane region" description="Helical" evidence="1">
    <location>
        <begin position="294"/>
        <end position="314"/>
    </location>
</feature>
<feature type="transmembrane region" description="Helical" evidence="1">
    <location>
        <begin position="322"/>
        <end position="342"/>
    </location>
</feature>
<feature type="transmembrane region" description="Helical" evidence="1">
    <location>
        <begin position="384"/>
        <end position="404"/>
    </location>
</feature>
<feature type="transmembrane region" description="Helical" evidence="1">
    <location>
        <begin position="411"/>
        <end position="431"/>
    </location>
</feature>
<feature type="transmembrane region" description="Helical" evidence="1">
    <location>
        <begin position="446"/>
        <end position="466"/>
    </location>
</feature>
<feature type="transmembrane region" description="Helical" evidence="1">
    <location>
        <begin position="473"/>
        <end position="493"/>
    </location>
</feature>
<feature type="region of interest" description="Disordered" evidence="3">
    <location>
        <begin position="1"/>
        <end position="49"/>
    </location>
</feature>
<feature type="compositionally biased region" description="Basic and acidic residues" evidence="3">
    <location>
        <begin position="32"/>
        <end position="49"/>
    </location>
</feature>
<feature type="glycosylation site" description="N-linked (GlcNAc...) asparagine" evidence="2">
    <location>
        <position position="38"/>
    </location>
</feature>
<feature type="glycosylation site" description="N-linked (GlcNAc...) asparagine" evidence="2">
    <location>
        <position position="97"/>
    </location>
</feature>
<feature type="glycosylation site" description="N-linked (GlcNAc...) asparagine" evidence="2">
    <location>
        <position position="238"/>
    </location>
</feature>
<feature type="glycosylation site" description="N-linked (GlcNAc...) asparagine" evidence="2">
    <location>
        <position position="253"/>
    </location>
</feature>
<comment type="function">
    <text evidence="6">MFS-type transporter; part of the gene cluster that mediates the biosynthesis of squalestatin S1 (SQS1, also known as zaragozic acid A), a heavily oxidized fungal polyketide that offers potent cholesterol lowering activity by targeting squalene synthase (SS).</text>
</comment>
<comment type="subcellular location">
    <subcellularLocation>
        <location evidence="1">Membrane</location>
        <topology evidence="1">Multi-pass membrane protein</topology>
    </subcellularLocation>
</comment>
<comment type="similarity">
    <text evidence="5">Belongs to the major facilitator superfamily.</text>
</comment>
<name>CLZ19_COCLU</name>
<evidence type="ECO:0000255" key="1"/>
<evidence type="ECO:0000255" key="2">
    <source>
        <dbReference type="PROSITE-ProRule" id="PRU00498"/>
    </source>
</evidence>
<evidence type="ECO:0000256" key="3">
    <source>
        <dbReference type="SAM" id="MobiDB-lite"/>
    </source>
</evidence>
<evidence type="ECO:0000303" key="4">
    <source>
    </source>
</evidence>
<evidence type="ECO:0000305" key="5"/>
<evidence type="ECO:0000305" key="6">
    <source>
    </source>
</evidence>
<protein>
    <recommendedName>
        <fullName evidence="4">MFS-type transporter clz19</fullName>
    </recommendedName>
    <alternativeName>
        <fullName evidence="4">Squalestatin S1 biosynthesis cluster protein clz19</fullName>
    </alternativeName>
    <alternativeName>
        <fullName evidence="4">Zaragozic acid A biosynthesis cluster protein 19</fullName>
    </alternativeName>
</protein>
<keyword id="KW-0325">Glycoprotein</keyword>
<keyword id="KW-0472">Membrane</keyword>
<keyword id="KW-0812">Transmembrane</keyword>
<keyword id="KW-1133">Transmembrane helix</keyword>
<keyword id="KW-0813">Transport</keyword>
<reference key="1">
    <citation type="journal article" date="2017" name="Org. Lett.">
        <title>Identification and heterologous production of a benzoyl-primed tricarboxylic acid polyketide intermediate from the zaragozic acid A biosynthetic pathway.</title>
        <authorList>
            <person name="Liu N."/>
            <person name="Hung Y.S."/>
            <person name="Gao S.S."/>
            <person name="Hang L."/>
            <person name="Zou Y."/>
            <person name="Chooi Y.H."/>
            <person name="Tang Y."/>
        </authorList>
    </citation>
    <scope>NUCLEOTIDE SEQUENCE [GENOMIC DNA]</scope>
    <scope>FUNCTION</scope>
    <source>
        <strain>ATCC 74067</strain>
    </source>
</reference>
<dbReference type="EMBL" id="MF806533">
    <property type="protein sequence ID" value="AXF50662.1"/>
    <property type="molecule type" value="Genomic_DNA"/>
</dbReference>
<dbReference type="SMR" id="A0A345BJP9"/>
<dbReference type="GlyCosmos" id="A0A345BJP9">
    <property type="glycosylation" value="4 sites, No reported glycans"/>
</dbReference>
<dbReference type="GO" id="GO:0005886">
    <property type="term" value="C:plasma membrane"/>
    <property type="evidence" value="ECO:0007669"/>
    <property type="project" value="TreeGrafter"/>
</dbReference>
<dbReference type="GO" id="GO:0022857">
    <property type="term" value="F:transmembrane transporter activity"/>
    <property type="evidence" value="ECO:0007669"/>
    <property type="project" value="InterPro"/>
</dbReference>
<dbReference type="GO" id="GO:0140115">
    <property type="term" value="P:export across plasma membrane"/>
    <property type="evidence" value="ECO:0007669"/>
    <property type="project" value="UniProtKB-ARBA"/>
</dbReference>
<dbReference type="GO" id="GO:0042908">
    <property type="term" value="P:xenobiotic transport"/>
    <property type="evidence" value="ECO:0007669"/>
    <property type="project" value="UniProtKB-ARBA"/>
</dbReference>
<dbReference type="FunFam" id="1.20.1250.20:FF:000172">
    <property type="entry name" value="MFS multidrug resistance transporter"/>
    <property type="match status" value="1"/>
</dbReference>
<dbReference type="FunFam" id="1.20.1720.10:FF:000009">
    <property type="entry name" value="MFS multidrug transporter"/>
    <property type="match status" value="1"/>
</dbReference>
<dbReference type="Gene3D" id="1.20.1250.20">
    <property type="entry name" value="MFS general substrate transporter like domains"/>
    <property type="match status" value="1"/>
</dbReference>
<dbReference type="InterPro" id="IPR011701">
    <property type="entry name" value="MFS"/>
</dbReference>
<dbReference type="InterPro" id="IPR020846">
    <property type="entry name" value="MFS_dom"/>
</dbReference>
<dbReference type="InterPro" id="IPR036259">
    <property type="entry name" value="MFS_trans_sf"/>
</dbReference>
<dbReference type="InterPro" id="IPR005829">
    <property type="entry name" value="Sugar_transporter_CS"/>
</dbReference>
<dbReference type="PANTHER" id="PTHR23502">
    <property type="entry name" value="MAJOR FACILITATOR SUPERFAMILY"/>
    <property type="match status" value="1"/>
</dbReference>
<dbReference type="PANTHER" id="PTHR23502:SF51">
    <property type="entry name" value="QUINIDINE RESISTANCE PROTEIN 1-RELATED"/>
    <property type="match status" value="1"/>
</dbReference>
<dbReference type="Pfam" id="PF07690">
    <property type="entry name" value="MFS_1"/>
    <property type="match status" value="1"/>
</dbReference>
<dbReference type="SUPFAM" id="SSF103473">
    <property type="entry name" value="MFS general substrate transporter"/>
    <property type="match status" value="1"/>
</dbReference>
<dbReference type="PROSITE" id="PS50850">
    <property type="entry name" value="MFS"/>
    <property type="match status" value="1"/>
</dbReference>
<dbReference type="PROSITE" id="PS00216">
    <property type="entry name" value="SUGAR_TRANSPORT_1"/>
    <property type="match status" value="1"/>
</dbReference>
<gene>
    <name evidence="4" type="primary">clz19</name>
</gene>
<accession>A0A345BJP9</accession>
<proteinExistence type="inferred from homology"/>
<organism>
    <name type="scientific">Cochliobolus lunatus</name>
    <name type="common">Filamentous fungus</name>
    <name type="synonym">Curvularia lunata</name>
    <dbReference type="NCBI Taxonomy" id="5503"/>
    <lineage>
        <taxon>Eukaryota</taxon>
        <taxon>Fungi</taxon>
        <taxon>Dikarya</taxon>
        <taxon>Ascomycota</taxon>
        <taxon>Pezizomycotina</taxon>
        <taxon>Dothideomycetes</taxon>
        <taxon>Pleosporomycetidae</taxon>
        <taxon>Pleosporales</taxon>
        <taxon>Pleosporineae</taxon>
        <taxon>Pleosporaceae</taxon>
        <taxon>Curvularia</taxon>
    </lineage>
</organism>